<gene>
    <name evidence="1" type="primary">gcvPA</name>
    <name type="ordered locus">Tpet_0711</name>
</gene>
<feature type="chain" id="PRO_1000045684" description="Probable glycine dehydrogenase (decarboxylating) subunit 1">
    <location>
        <begin position="1"/>
        <end position="437"/>
    </location>
</feature>
<dbReference type="EC" id="1.4.4.2" evidence="1"/>
<dbReference type="EMBL" id="CP000702">
    <property type="protein sequence ID" value="ABQ46731.1"/>
    <property type="molecule type" value="Genomic_DNA"/>
</dbReference>
<dbReference type="RefSeq" id="WP_011943315.1">
    <property type="nucleotide sequence ID" value="NC_009486.1"/>
</dbReference>
<dbReference type="SMR" id="A5IKK8"/>
<dbReference type="STRING" id="390874.Tpet_0711"/>
<dbReference type="KEGG" id="tpt:Tpet_0711"/>
<dbReference type="eggNOG" id="COG0403">
    <property type="taxonomic scope" value="Bacteria"/>
</dbReference>
<dbReference type="HOGENOM" id="CLU_004620_0_2_0"/>
<dbReference type="Proteomes" id="UP000006558">
    <property type="component" value="Chromosome"/>
</dbReference>
<dbReference type="GO" id="GO:0004375">
    <property type="term" value="F:glycine dehydrogenase (decarboxylating) activity"/>
    <property type="evidence" value="ECO:0007669"/>
    <property type="project" value="UniProtKB-EC"/>
</dbReference>
<dbReference type="GO" id="GO:0019464">
    <property type="term" value="P:glycine decarboxylation via glycine cleavage system"/>
    <property type="evidence" value="ECO:0007669"/>
    <property type="project" value="UniProtKB-UniRule"/>
</dbReference>
<dbReference type="GO" id="GO:0009116">
    <property type="term" value="P:nucleoside metabolic process"/>
    <property type="evidence" value="ECO:0007669"/>
    <property type="project" value="InterPro"/>
</dbReference>
<dbReference type="CDD" id="cd00613">
    <property type="entry name" value="GDC-P"/>
    <property type="match status" value="1"/>
</dbReference>
<dbReference type="Gene3D" id="3.90.1150.10">
    <property type="entry name" value="Aspartate Aminotransferase, domain 1"/>
    <property type="match status" value="1"/>
</dbReference>
<dbReference type="Gene3D" id="3.40.640.10">
    <property type="entry name" value="Type I PLP-dependent aspartate aminotransferase-like (Major domain)"/>
    <property type="match status" value="1"/>
</dbReference>
<dbReference type="HAMAP" id="MF_00712">
    <property type="entry name" value="GcvPA"/>
    <property type="match status" value="1"/>
</dbReference>
<dbReference type="InterPro" id="IPR023010">
    <property type="entry name" value="GcvPA"/>
</dbReference>
<dbReference type="InterPro" id="IPR049315">
    <property type="entry name" value="GDC-P_N"/>
</dbReference>
<dbReference type="InterPro" id="IPR020581">
    <property type="entry name" value="GDC_P"/>
</dbReference>
<dbReference type="InterPro" id="IPR015424">
    <property type="entry name" value="PyrdxlP-dep_Trfase"/>
</dbReference>
<dbReference type="InterPro" id="IPR015421">
    <property type="entry name" value="PyrdxlP-dep_Trfase_major"/>
</dbReference>
<dbReference type="InterPro" id="IPR015422">
    <property type="entry name" value="PyrdxlP-dep_Trfase_small"/>
</dbReference>
<dbReference type="NCBIfam" id="NF001696">
    <property type="entry name" value="PRK00451.1"/>
    <property type="match status" value="1"/>
</dbReference>
<dbReference type="PANTHER" id="PTHR42806">
    <property type="entry name" value="GLYCINE CLEAVAGE SYSTEM P-PROTEIN"/>
    <property type="match status" value="1"/>
</dbReference>
<dbReference type="PANTHER" id="PTHR42806:SF1">
    <property type="entry name" value="GLYCINE DEHYDROGENASE (DECARBOXYLATING)"/>
    <property type="match status" value="1"/>
</dbReference>
<dbReference type="Pfam" id="PF02347">
    <property type="entry name" value="GDC-P"/>
    <property type="match status" value="1"/>
</dbReference>
<dbReference type="PIRSF" id="PIRSF006815">
    <property type="entry name" value="GcvPA"/>
    <property type="match status" value="1"/>
</dbReference>
<dbReference type="SUPFAM" id="SSF53383">
    <property type="entry name" value="PLP-dependent transferases"/>
    <property type="match status" value="1"/>
</dbReference>
<keyword id="KW-0560">Oxidoreductase</keyword>
<name>GCSPA_THEP1</name>
<organism>
    <name type="scientific">Thermotoga petrophila (strain ATCC BAA-488 / DSM 13995 / JCM 10881 / RKU-1)</name>
    <dbReference type="NCBI Taxonomy" id="390874"/>
    <lineage>
        <taxon>Bacteria</taxon>
        <taxon>Thermotogati</taxon>
        <taxon>Thermotogota</taxon>
        <taxon>Thermotogae</taxon>
        <taxon>Thermotogales</taxon>
        <taxon>Thermotogaceae</taxon>
        <taxon>Thermotoga</taxon>
    </lineage>
</organism>
<proteinExistence type="inferred from homology"/>
<reference key="1">
    <citation type="submission" date="2007-05" db="EMBL/GenBank/DDBJ databases">
        <title>Complete sequence of Thermotoga petrophila RKU-1.</title>
        <authorList>
            <consortium name="US DOE Joint Genome Institute"/>
            <person name="Copeland A."/>
            <person name="Lucas S."/>
            <person name="Lapidus A."/>
            <person name="Barry K."/>
            <person name="Glavina del Rio T."/>
            <person name="Dalin E."/>
            <person name="Tice H."/>
            <person name="Pitluck S."/>
            <person name="Sims D."/>
            <person name="Brettin T."/>
            <person name="Bruce D."/>
            <person name="Detter J.C."/>
            <person name="Han C."/>
            <person name="Tapia R."/>
            <person name="Schmutz J."/>
            <person name="Larimer F."/>
            <person name="Land M."/>
            <person name="Hauser L."/>
            <person name="Kyrpides N."/>
            <person name="Mikhailova N."/>
            <person name="Nelson K."/>
            <person name="Gogarten J.P."/>
            <person name="Noll K."/>
            <person name="Richardson P."/>
        </authorList>
    </citation>
    <scope>NUCLEOTIDE SEQUENCE [LARGE SCALE GENOMIC DNA]</scope>
    <source>
        <strain>ATCC BAA-488 / DSM 13995 / JCM 10881 / RKU-1</strain>
    </source>
</reference>
<evidence type="ECO:0000255" key="1">
    <source>
        <dbReference type="HAMAP-Rule" id="MF_00712"/>
    </source>
</evidence>
<protein>
    <recommendedName>
        <fullName evidence="1">Probable glycine dehydrogenase (decarboxylating) subunit 1</fullName>
        <ecNumber evidence="1">1.4.4.2</ecNumber>
    </recommendedName>
    <alternativeName>
        <fullName evidence="1">Glycine cleavage system P-protein subunit 1</fullName>
    </alternativeName>
    <alternativeName>
        <fullName evidence="1">Glycine decarboxylase subunit 1</fullName>
    </alternativeName>
    <alternativeName>
        <fullName evidence="1">Glycine dehydrogenase (aminomethyl-transferring) subunit 1</fullName>
    </alternativeName>
</protein>
<comment type="function">
    <text evidence="1">The glycine cleavage system catalyzes the degradation of glycine. The P protein binds the alpha-amino group of glycine through its pyridoxal phosphate cofactor; CO(2) is released and the remaining methylamine moiety is then transferred to the lipoamide cofactor of the H protein.</text>
</comment>
<comment type="catalytic activity">
    <reaction evidence="1">
        <text>N(6)-[(R)-lipoyl]-L-lysyl-[glycine-cleavage complex H protein] + glycine + H(+) = N(6)-[(R)-S(8)-aminomethyldihydrolipoyl]-L-lysyl-[glycine-cleavage complex H protein] + CO2</text>
        <dbReference type="Rhea" id="RHEA:24304"/>
        <dbReference type="Rhea" id="RHEA-COMP:10494"/>
        <dbReference type="Rhea" id="RHEA-COMP:10495"/>
        <dbReference type="ChEBI" id="CHEBI:15378"/>
        <dbReference type="ChEBI" id="CHEBI:16526"/>
        <dbReference type="ChEBI" id="CHEBI:57305"/>
        <dbReference type="ChEBI" id="CHEBI:83099"/>
        <dbReference type="ChEBI" id="CHEBI:83143"/>
        <dbReference type="EC" id="1.4.4.2"/>
    </reaction>
</comment>
<comment type="subunit">
    <text evidence="1">The glycine cleavage system is composed of four proteins: P, T, L and H. In this organism, the P 'protein' is a heterodimer of two subunits.</text>
</comment>
<comment type="similarity">
    <text evidence="1">Belongs to the GcvP family. N-terminal subunit subfamily.</text>
</comment>
<sequence length="437" mass="48830">MNYPYIPHTDEDIRAMLEFIGVSSIEDLFSSIPVSARSSLNIPESRDEFSVFKRLKEISEVNASLEDYAVFLGAGVYKRYVPTVVYDLAMKPDFLTAYTPYQAEVSQGTLQALFEYQTMVCELTGMEVANASMYDGATALAEAALMSFRLTGKEKVVVARSVHPEYRAVLRTYLEKRGFTVVEAGYDETGRVLLEEVDEETAAIAIQYPNFFGIIEDLDYVRSRSGNALLIVVVEPVSLALLEPPGSYGADIVVGEGQSLGLPMWFGGYSLGIFATKEKYVRQMPGRLIGQTVDQDGSVTYTMILQTREQHIRRARATSNICSNHAHAALIAAVYMSVMGPDGLREVARRSYSAAHYLQERLEDMGFKLCFSGEFFSEFVFNVPEDYPERWKWMMAKKILGPLPLKGFYPELGDTALACATEVISKEDIEKLLEAMK</sequence>
<accession>A5IKK8</accession>